<proteinExistence type="inferred from homology"/>
<accession>Q9BM94</accession>
<accession>B4HZK6</accession>
<accession>Q9BMZ0</accession>
<feature type="chain" id="PRO_0000206169" description="Sex-regulated protein janus-B">
    <location>
        <begin position="1"/>
        <end position="140"/>
    </location>
</feature>
<feature type="active site" description="Proton acceptor" evidence="1">
    <location>
        <position position="69"/>
    </location>
</feature>
<feature type="binding site" evidence="1">
    <location>
        <position position="42"/>
    </location>
    <ligand>
        <name>substrate</name>
    </ligand>
</feature>
<feature type="binding site" evidence="1">
    <location>
        <begin position="110"/>
        <end position="112"/>
    </location>
    <ligand>
        <name>substrate</name>
    </ligand>
</feature>
<sequence length="140" mass="15787">MKMLKSLSLIPRIVSPFQKCYSTDLISLVGVPRVKISKGQNRYLLVNIHTHGFTKYGRVIVRGADVDNHLAIFDSILEELEPEGICAKILGGGRILNEPDNKKIKIYGTSRTFGGADHTRTRNILQAWTTYKDFKITVKQ</sequence>
<name>JANB_DROSE</name>
<reference evidence="4" key="1">
    <citation type="journal article" date="2001" name="Mol. Biol. Evol.">
        <title>Molecular evolution of the ocnus and janus genes in the Drosophila melanogaster species subgroup.</title>
        <authorList>
            <person name="Parsch J."/>
            <person name="Meiklejohn C.D."/>
            <person name="Hauschteck-Jungen E."/>
            <person name="Hunziker P."/>
            <person name="Hartl D.L."/>
        </authorList>
    </citation>
    <scope>NUCLEOTIDE SEQUENCE [GENOMIC DNA]</scope>
</reference>
<reference key="2">
    <citation type="journal article" date="2007" name="Nature">
        <title>Evolution of genes and genomes on the Drosophila phylogeny.</title>
        <authorList>
            <consortium name="Drosophila 12 genomes consortium"/>
        </authorList>
    </citation>
    <scope>NUCLEOTIDE SEQUENCE [LARGE SCALE GENOMIC DNA]</scope>
    <source>
        <strain>Rob3c / Tucson 14021-0248.25</strain>
    </source>
</reference>
<reference evidence="2" key="3">
    <citation type="journal article" date="2000" name="Genetics">
        <title>The population genetics of the origin and divergence of the Drosophila simulans complex species.</title>
        <authorList>
            <person name="Kliman R.M."/>
            <person name="Andolfatto P."/>
            <person name="Coyne J.A."/>
            <person name="Depaulis F."/>
            <person name="Kreitman M."/>
            <person name="Berry A.J."/>
            <person name="McCarter J."/>
            <person name="Wakeley J."/>
            <person name="Hey J."/>
        </authorList>
    </citation>
    <scope>NUCLEOTIDE SEQUENCE [GENOMIC DNA] OF 1-76</scope>
    <source>
        <strain evidence="3">228</strain>
    </source>
</reference>
<evidence type="ECO:0000250" key="1"/>
<evidence type="ECO:0000305" key="2"/>
<evidence type="ECO:0000312" key="3">
    <source>
        <dbReference type="EMBL" id="AAG49479.1"/>
    </source>
</evidence>
<evidence type="ECO:0000312" key="4">
    <source>
        <dbReference type="EMBL" id="AAG50367.1"/>
    </source>
</evidence>
<organism evidence="4">
    <name type="scientific">Drosophila sechellia</name>
    <name type="common">Fruit fly</name>
    <dbReference type="NCBI Taxonomy" id="7238"/>
    <lineage>
        <taxon>Eukaryota</taxon>
        <taxon>Metazoa</taxon>
        <taxon>Ecdysozoa</taxon>
        <taxon>Arthropoda</taxon>
        <taxon>Hexapoda</taxon>
        <taxon>Insecta</taxon>
        <taxon>Pterygota</taxon>
        <taxon>Neoptera</taxon>
        <taxon>Endopterygota</taxon>
        <taxon>Diptera</taxon>
        <taxon>Brachycera</taxon>
        <taxon>Muscomorpha</taxon>
        <taxon>Ephydroidea</taxon>
        <taxon>Drosophilidae</taxon>
        <taxon>Drosophila</taxon>
        <taxon>Sophophora</taxon>
    </lineage>
</organism>
<comment type="function">
    <text evidence="1">JanA and janB regulate somatic sex differentiation.</text>
</comment>
<comment type="similarity">
    <text evidence="2">Belongs to the janus family.</text>
</comment>
<dbReference type="EMBL" id="AY013346">
    <property type="protein sequence ID" value="AAG50367.1"/>
    <property type="molecule type" value="Genomic_DNA"/>
</dbReference>
<dbReference type="EMBL" id="CH480819">
    <property type="protein sequence ID" value="EDW53463.1"/>
    <property type="molecule type" value="Genomic_DNA"/>
</dbReference>
<dbReference type="EMBL" id="AF284459">
    <property type="protein sequence ID" value="AAG49479.1"/>
    <property type="molecule type" value="Genomic_DNA"/>
</dbReference>
<dbReference type="SMR" id="Q9BM94"/>
<dbReference type="STRING" id="7238.Q9BM94"/>
<dbReference type="EnsemblMetazoa" id="FBtr0195173">
    <property type="protein sequence ID" value="FBpp0193665"/>
    <property type="gene ID" value="FBgn0043636"/>
</dbReference>
<dbReference type="EnsemblMetazoa" id="XM_002037268.2">
    <property type="protein sequence ID" value="XP_002037304.1"/>
    <property type="gene ID" value="LOC6612803"/>
</dbReference>
<dbReference type="GeneID" id="6612803"/>
<dbReference type="KEGG" id="dse:6612803"/>
<dbReference type="HOGENOM" id="CLU_120717_1_0_1"/>
<dbReference type="OMA" id="WTTYKDF"/>
<dbReference type="OrthoDB" id="4321at7215"/>
<dbReference type="PhylomeDB" id="Q9BM94"/>
<dbReference type="Proteomes" id="UP000001292">
    <property type="component" value="Unassembled WGS sequence"/>
</dbReference>
<dbReference type="GO" id="GO:0005829">
    <property type="term" value="C:cytosol"/>
    <property type="evidence" value="ECO:0007669"/>
    <property type="project" value="TreeGrafter"/>
</dbReference>
<dbReference type="GO" id="GO:0101006">
    <property type="term" value="F:protein histidine phosphatase activity"/>
    <property type="evidence" value="ECO:0007669"/>
    <property type="project" value="TreeGrafter"/>
</dbReference>
<dbReference type="GO" id="GO:0030154">
    <property type="term" value="P:cell differentiation"/>
    <property type="evidence" value="ECO:0007669"/>
    <property type="project" value="UniProtKB-KW"/>
</dbReference>
<dbReference type="GO" id="GO:0007548">
    <property type="term" value="P:sex differentiation"/>
    <property type="evidence" value="ECO:0000250"/>
    <property type="project" value="UniProtKB"/>
</dbReference>
<dbReference type="FunFam" id="3.50.20.20:FF:000002">
    <property type="entry name" value="Sex-regulated protein janus-B"/>
    <property type="match status" value="1"/>
</dbReference>
<dbReference type="Gene3D" id="3.50.20.20">
    <property type="entry name" value="Janus/Ocnus"/>
    <property type="match status" value="1"/>
</dbReference>
<dbReference type="InterPro" id="IPR007702">
    <property type="entry name" value="Janus"/>
</dbReference>
<dbReference type="InterPro" id="IPR038596">
    <property type="entry name" value="Janus_sf"/>
</dbReference>
<dbReference type="PANTHER" id="PTHR12258:SF5">
    <property type="entry name" value="BCDNA.GH02250-RELATED"/>
    <property type="match status" value="1"/>
</dbReference>
<dbReference type="PANTHER" id="PTHR12258">
    <property type="entry name" value="JANUS-A/JANUS-B"/>
    <property type="match status" value="1"/>
</dbReference>
<dbReference type="Pfam" id="PF05005">
    <property type="entry name" value="Ocnus"/>
    <property type="match status" value="1"/>
</dbReference>
<dbReference type="SUPFAM" id="SSF143724">
    <property type="entry name" value="PHP14-like"/>
    <property type="match status" value="1"/>
</dbReference>
<gene>
    <name type="primary">janB</name>
    <name type="ORF">GM12188</name>
</gene>
<protein>
    <recommendedName>
        <fullName>Sex-regulated protein janus-B</fullName>
    </recommendedName>
</protein>
<keyword id="KW-0221">Differentiation</keyword>
<keyword id="KW-1185">Reference proteome</keyword>
<keyword id="KW-0726">Sexual differentiation</keyword>